<organism>
    <name type="scientific">Synechococcus sp. (strain WH7803)</name>
    <dbReference type="NCBI Taxonomy" id="32051"/>
    <lineage>
        <taxon>Bacteria</taxon>
        <taxon>Bacillati</taxon>
        <taxon>Cyanobacteriota</taxon>
        <taxon>Cyanophyceae</taxon>
        <taxon>Synechococcales</taxon>
        <taxon>Synechococcaceae</taxon>
        <taxon>Synechococcus</taxon>
    </lineage>
</organism>
<sequence>MSIPQGLQERAAELRQLLNRAAHAYYVLDAPDLEDSVYDRLYRELLDLEAAHPELVEADSPTQRVGGSPAEGFRSVTHRIPLFSLDNAFSAEELRGWYTRLLKVLDREPPSGSPLPALAMVGELKIDGNALALSYDNGVLVRAATRGDGDQGEDITANVRTIASIPLRLHLDPPPAWVEVRGEALIPDNTFAAINSERAARDEPLFANPRNACAGTLRQLDPKVVAARRLDFFAYTLHLPEDWSGERPTSQWESLRWLEDAGFRVNPNAALLPDVDSVEQFFGDWDSRRHDLNYATDGVVVKLNDLRLQDAAGFTQKAPRWAIALKYPAEEAPSRLLKLTCQVGRTGVVTPVAEFEPVSLAGTSVSRATLHNADRLQELDLHSGDTIIVRKAGEIIPEVLRVLPELRPEGALPLELPQQCPSCGSDLVRESGEAATRCVNSSCPAILSGALRHWVSKGALDVDGLGSKLIEQLVERGLVRSIADLYRLDTALLTSLERMGEKSAGNLVAALAQSRTQPWSRQLYGLGIHHVGEVNAKALASAFADAHSLADAAVQRPEAITDLHGIGPEIAQSLQQWFNTSANQDLLQQLRAVGLTLAASDQERQALADRNNGKGHLNGQTFVLTGTLPSLSRSQAQALIEGAGGKVSGSVSKKTSFVVAGDEAGSKLDKANTLGVSVLDEAALMLLIQNSADTIHLL</sequence>
<gene>
    <name evidence="1" type="primary">ligA</name>
    <name type="ordered locus">SynWH7803_2428</name>
</gene>
<proteinExistence type="inferred from homology"/>
<dbReference type="EC" id="6.5.1.2" evidence="1"/>
<dbReference type="EMBL" id="CT971583">
    <property type="protein sequence ID" value="CAK24854.1"/>
    <property type="molecule type" value="Genomic_DNA"/>
</dbReference>
<dbReference type="SMR" id="A5GPI9"/>
<dbReference type="STRING" id="32051.SynWH7803_2428"/>
<dbReference type="KEGG" id="syx:SynWH7803_2428"/>
<dbReference type="eggNOG" id="COG0272">
    <property type="taxonomic scope" value="Bacteria"/>
</dbReference>
<dbReference type="HOGENOM" id="CLU_007764_2_1_3"/>
<dbReference type="OrthoDB" id="9759736at2"/>
<dbReference type="Proteomes" id="UP000001566">
    <property type="component" value="Chromosome"/>
</dbReference>
<dbReference type="GO" id="GO:0005829">
    <property type="term" value="C:cytosol"/>
    <property type="evidence" value="ECO:0007669"/>
    <property type="project" value="TreeGrafter"/>
</dbReference>
<dbReference type="GO" id="GO:0003677">
    <property type="term" value="F:DNA binding"/>
    <property type="evidence" value="ECO:0007669"/>
    <property type="project" value="InterPro"/>
</dbReference>
<dbReference type="GO" id="GO:0003911">
    <property type="term" value="F:DNA ligase (NAD+) activity"/>
    <property type="evidence" value="ECO:0007669"/>
    <property type="project" value="UniProtKB-UniRule"/>
</dbReference>
<dbReference type="GO" id="GO:0046872">
    <property type="term" value="F:metal ion binding"/>
    <property type="evidence" value="ECO:0007669"/>
    <property type="project" value="UniProtKB-KW"/>
</dbReference>
<dbReference type="GO" id="GO:0006281">
    <property type="term" value="P:DNA repair"/>
    <property type="evidence" value="ECO:0007669"/>
    <property type="project" value="UniProtKB-KW"/>
</dbReference>
<dbReference type="GO" id="GO:0006260">
    <property type="term" value="P:DNA replication"/>
    <property type="evidence" value="ECO:0007669"/>
    <property type="project" value="UniProtKB-KW"/>
</dbReference>
<dbReference type="CDD" id="cd00114">
    <property type="entry name" value="LIGANc"/>
    <property type="match status" value="1"/>
</dbReference>
<dbReference type="FunFam" id="1.10.150.20:FF:000007">
    <property type="entry name" value="DNA ligase"/>
    <property type="match status" value="1"/>
</dbReference>
<dbReference type="FunFam" id="2.40.50.140:FF:000012">
    <property type="entry name" value="DNA ligase"/>
    <property type="match status" value="1"/>
</dbReference>
<dbReference type="FunFam" id="3.30.470.30:FF:000001">
    <property type="entry name" value="DNA ligase"/>
    <property type="match status" value="1"/>
</dbReference>
<dbReference type="Gene3D" id="6.20.10.30">
    <property type="match status" value="1"/>
</dbReference>
<dbReference type="Gene3D" id="1.10.150.20">
    <property type="entry name" value="5' to 3' exonuclease, C-terminal subdomain"/>
    <property type="match status" value="2"/>
</dbReference>
<dbReference type="Gene3D" id="3.40.50.10190">
    <property type="entry name" value="BRCT domain"/>
    <property type="match status" value="1"/>
</dbReference>
<dbReference type="Gene3D" id="3.30.470.30">
    <property type="entry name" value="DNA ligase/mRNA capping enzyme"/>
    <property type="match status" value="1"/>
</dbReference>
<dbReference type="Gene3D" id="1.10.287.610">
    <property type="entry name" value="Helix hairpin bin"/>
    <property type="match status" value="1"/>
</dbReference>
<dbReference type="Gene3D" id="2.40.50.140">
    <property type="entry name" value="Nucleic acid-binding proteins"/>
    <property type="match status" value="1"/>
</dbReference>
<dbReference type="HAMAP" id="MF_01588">
    <property type="entry name" value="DNA_ligase_A"/>
    <property type="match status" value="1"/>
</dbReference>
<dbReference type="InterPro" id="IPR001357">
    <property type="entry name" value="BRCT_dom"/>
</dbReference>
<dbReference type="InterPro" id="IPR036420">
    <property type="entry name" value="BRCT_dom_sf"/>
</dbReference>
<dbReference type="InterPro" id="IPR041663">
    <property type="entry name" value="DisA/LigA_HHH"/>
</dbReference>
<dbReference type="InterPro" id="IPR001679">
    <property type="entry name" value="DNA_ligase"/>
</dbReference>
<dbReference type="InterPro" id="IPR033136">
    <property type="entry name" value="DNA_ligase_CS"/>
</dbReference>
<dbReference type="InterPro" id="IPR013839">
    <property type="entry name" value="DNAligase_adenylation"/>
</dbReference>
<dbReference type="InterPro" id="IPR013840">
    <property type="entry name" value="DNAligase_N"/>
</dbReference>
<dbReference type="InterPro" id="IPR003583">
    <property type="entry name" value="Hlx-hairpin-Hlx_DNA-bd_motif"/>
</dbReference>
<dbReference type="InterPro" id="IPR012340">
    <property type="entry name" value="NA-bd_OB-fold"/>
</dbReference>
<dbReference type="InterPro" id="IPR004150">
    <property type="entry name" value="NAD_DNA_ligase_OB"/>
</dbReference>
<dbReference type="InterPro" id="IPR010994">
    <property type="entry name" value="RuvA_2-like"/>
</dbReference>
<dbReference type="InterPro" id="IPR004149">
    <property type="entry name" value="Znf_DNAligase_C4"/>
</dbReference>
<dbReference type="NCBIfam" id="TIGR00575">
    <property type="entry name" value="dnlj"/>
    <property type="match status" value="1"/>
</dbReference>
<dbReference type="NCBIfam" id="NF005932">
    <property type="entry name" value="PRK07956.1"/>
    <property type="match status" value="1"/>
</dbReference>
<dbReference type="PANTHER" id="PTHR23389">
    <property type="entry name" value="CHROMOSOME TRANSMISSION FIDELITY FACTOR 18"/>
    <property type="match status" value="1"/>
</dbReference>
<dbReference type="PANTHER" id="PTHR23389:SF9">
    <property type="entry name" value="DNA LIGASE"/>
    <property type="match status" value="1"/>
</dbReference>
<dbReference type="Pfam" id="PF00533">
    <property type="entry name" value="BRCT"/>
    <property type="match status" value="1"/>
</dbReference>
<dbReference type="Pfam" id="PF01653">
    <property type="entry name" value="DNA_ligase_aden"/>
    <property type="match status" value="1"/>
</dbReference>
<dbReference type="Pfam" id="PF03120">
    <property type="entry name" value="DNA_ligase_OB"/>
    <property type="match status" value="1"/>
</dbReference>
<dbReference type="Pfam" id="PF03119">
    <property type="entry name" value="DNA_ligase_ZBD"/>
    <property type="match status" value="1"/>
</dbReference>
<dbReference type="Pfam" id="PF12826">
    <property type="entry name" value="HHH_2"/>
    <property type="match status" value="1"/>
</dbReference>
<dbReference type="Pfam" id="PF14520">
    <property type="entry name" value="HHH_5"/>
    <property type="match status" value="1"/>
</dbReference>
<dbReference type="Pfam" id="PF22745">
    <property type="entry name" value="Nlig-Ia"/>
    <property type="match status" value="1"/>
</dbReference>
<dbReference type="PIRSF" id="PIRSF001604">
    <property type="entry name" value="LigA"/>
    <property type="match status" value="1"/>
</dbReference>
<dbReference type="SMART" id="SM00292">
    <property type="entry name" value="BRCT"/>
    <property type="match status" value="1"/>
</dbReference>
<dbReference type="SMART" id="SM00278">
    <property type="entry name" value="HhH1"/>
    <property type="match status" value="3"/>
</dbReference>
<dbReference type="SMART" id="SM00532">
    <property type="entry name" value="LIGANc"/>
    <property type="match status" value="1"/>
</dbReference>
<dbReference type="SUPFAM" id="SSF52113">
    <property type="entry name" value="BRCT domain"/>
    <property type="match status" value="1"/>
</dbReference>
<dbReference type="SUPFAM" id="SSF56091">
    <property type="entry name" value="DNA ligase/mRNA capping enzyme, catalytic domain"/>
    <property type="match status" value="1"/>
</dbReference>
<dbReference type="SUPFAM" id="SSF50249">
    <property type="entry name" value="Nucleic acid-binding proteins"/>
    <property type="match status" value="1"/>
</dbReference>
<dbReference type="SUPFAM" id="SSF47781">
    <property type="entry name" value="RuvA domain 2-like"/>
    <property type="match status" value="1"/>
</dbReference>
<dbReference type="PROSITE" id="PS50172">
    <property type="entry name" value="BRCT"/>
    <property type="match status" value="1"/>
</dbReference>
<dbReference type="PROSITE" id="PS01056">
    <property type="entry name" value="DNA_LIGASE_N2"/>
    <property type="match status" value="1"/>
</dbReference>
<feature type="chain" id="PRO_0000313486" description="DNA ligase">
    <location>
        <begin position="1"/>
        <end position="698"/>
    </location>
</feature>
<feature type="domain" description="BRCT" evidence="1">
    <location>
        <begin position="612"/>
        <end position="698"/>
    </location>
</feature>
<feature type="active site" description="N6-AMP-lysine intermediate" evidence="1">
    <location>
        <position position="125"/>
    </location>
</feature>
<feature type="binding site" evidence="1">
    <location>
        <begin position="35"/>
        <end position="39"/>
    </location>
    <ligand>
        <name>NAD(+)</name>
        <dbReference type="ChEBI" id="CHEBI:57540"/>
    </ligand>
</feature>
<feature type="binding site" evidence="1">
    <location>
        <begin position="84"/>
        <end position="85"/>
    </location>
    <ligand>
        <name>NAD(+)</name>
        <dbReference type="ChEBI" id="CHEBI:57540"/>
    </ligand>
</feature>
<feature type="binding site" evidence="1">
    <location>
        <position position="123"/>
    </location>
    <ligand>
        <name>NAD(+)</name>
        <dbReference type="ChEBI" id="CHEBI:57540"/>
    </ligand>
</feature>
<feature type="binding site" evidence="1">
    <location>
        <position position="146"/>
    </location>
    <ligand>
        <name>NAD(+)</name>
        <dbReference type="ChEBI" id="CHEBI:57540"/>
    </ligand>
</feature>
<feature type="binding site" evidence="1">
    <location>
        <position position="183"/>
    </location>
    <ligand>
        <name>NAD(+)</name>
        <dbReference type="ChEBI" id="CHEBI:57540"/>
    </ligand>
</feature>
<feature type="binding site" evidence="1">
    <location>
        <position position="302"/>
    </location>
    <ligand>
        <name>NAD(+)</name>
        <dbReference type="ChEBI" id="CHEBI:57540"/>
    </ligand>
</feature>
<feature type="binding site" evidence="1">
    <location>
        <position position="326"/>
    </location>
    <ligand>
        <name>NAD(+)</name>
        <dbReference type="ChEBI" id="CHEBI:57540"/>
    </ligand>
</feature>
<feature type="binding site" evidence="1">
    <location>
        <position position="420"/>
    </location>
    <ligand>
        <name>Zn(2+)</name>
        <dbReference type="ChEBI" id="CHEBI:29105"/>
    </ligand>
</feature>
<feature type="binding site" evidence="1">
    <location>
        <position position="423"/>
    </location>
    <ligand>
        <name>Zn(2+)</name>
        <dbReference type="ChEBI" id="CHEBI:29105"/>
    </ligand>
</feature>
<feature type="binding site" evidence="1">
    <location>
        <position position="438"/>
    </location>
    <ligand>
        <name>Zn(2+)</name>
        <dbReference type="ChEBI" id="CHEBI:29105"/>
    </ligand>
</feature>
<feature type="binding site" evidence="1">
    <location>
        <position position="443"/>
    </location>
    <ligand>
        <name>Zn(2+)</name>
        <dbReference type="ChEBI" id="CHEBI:29105"/>
    </ligand>
</feature>
<accession>A5GPI9</accession>
<evidence type="ECO:0000255" key="1">
    <source>
        <dbReference type="HAMAP-Rule" id="MF_01588"/>
    </source>
</evidence>
<name>DNLJ_SYNPW</name>
<protein>
    <recommendedName>
        <fullName evidence="1">DNA ligase</fullName>
        <ecNumber evidence="1">6.5.1.2</ecNumber>
    </recommendedName>
    <alternativeName>
        <fullName evidence="1">Polydeoxyribonucleotide synthase [NAD(+)]</fullName>
    </alternativeName>
</protein>
<keyword id="KW-0227">DNA damage</keyword>
<keyword id="KW-0234">DNA repair</keyword>
<keyword id="KW-0235">DNA replication</keyword>
<keyword id="KW-0436">Ligase</keyword>
<keyword id="KW-0460">Magnesium</keyword>
<keyword id="KW-0464">Manganese</keyword>
<keyword id="KW-0479">Metal-binding</keyword>
<keyword id="KW-0520">NAD</keyword>
<keyword id="KW-1185">Reference proteome</keyword>
<keyword id="KW-0862">Zinc</keyword>
<comment type="function">
    <text evidence="1">DNA ligase that catalyzes the formation of phosphodiester linkages between 5'-phosphoryl and 3'-hydroxyl groups in double-stranded DNA using NAD as a coenzyme and as the energy source for the reaction. It is essential for DNA replication and repair of damaged DNA.</text>
</comment>
<comment type="catalytic activity">
    <reaction evidence="1">
        <text>NAD(+) + (deoxyribonucleotide)n-3'-hydroxyl + 5'-phospho-(deoxyribonucleotide)m = (deoxyribonucleotide)n+m + AMP + beta-nicotinamide D-nucleotide.</text>
        <dbReference type="EC" id="6.5.1.2"/>
    </reaction>
</comment>
<comment type="cofactor">
    <cofactor evidence="1">
        <name>Mg(2+)</name>
        <dbReference type="ChEBI" id="CHEBI:18420"/>
    </cofactor>
    <cofactor evidence="1">
        <name>Mn(2+)</name>
        <dbReference type="ChEBI" id="CHEBI:29035"/>
    </cofactor>
</comment>
<comment type="similarity">
    <text evidence="1">Belongs to the NAD-dependent DNA ligase family. LigA subfamily.</text>
</comment>
<reference key="1">
    <citation type="submission" date="2006-05" db="EMBL/GenBank/DDBJ databases">
        <authorList>
            <consortium name="Genoscope"/>
        </authorList>
    </citation>
    <scope>NUCLEOTIDE SEQUENCE [LARGE SCALE GENOMIC DNA]</scope>
    <source>
        <strain>WH7803</strain>
    </source>
</reference>